<feature type="chain" id="PRO_1000147862" description="Rhomboid protease GlpG">
    <location>
        <begin position="1"/>
        <end position="276"/>
    </location>
</feature>
<feature type="transmembrane region" description="Helical" evidence="1">
    <location>
        <begin position="94"/>
        <end position="114"/>
    </location>
</feature>
<feature type="transmembrane region" description="Helical" evidence="1">
    <location>
        <begin position="142"/>
        <end position="162"/>
    </location>
</feature>
<feature type="transmembrane region" description="Helical" evidence="1">
    <location>
        <begin position="169"/>
        <end position="189"/>
    </location>
</feature>
<feature type="transmembrane region" description="Helical" evidence="1">
    <location>
        <begin position="192"/>
        <end position="212"/>
    </location>
</feature>
<feature type="transmembrane region" description="Helical" evidence="1">
    <location>
        <begin position="229"/>
        <end position="249"/>
    </location>
</feature>
<feature type="transmembrane region" description="Helical" evidence="1">
    <location>
        <begin position="250"/>
        <end position="270"/>
    </location>
</feature>
<feature type="active site" description="Nucleophile" evidence="1">
    <location>
        <position position="201"/>
    </location>
</feature>
<feature type="active site" evidence="1">
    <location>
        <position position="254"/>
    </location>
</feature>
<reference key="1">
    <citation type="journal article" date="2011" name="J. Bacteriol.">
        <title>Comparative genomics of 28 Salmonella enterica isolates: evidence for CRISPR-mediated adaptive sublineage evolution.</title>
        <authorList>
            <person name="Fricke W.F."/>
            <person name="Mammel M.K."/>
            <person name="McDermott P.F."/>
            <person name="Tartera C."/>
            <person name="White D.G."/>
            <person name="Leclerc J.E."/>
            <person name="Ravel J."/>
            <person name="Cebula T.A."/>
        </authorList>
    </citation>
    <scope>NUCLEOTIDE SEQUENCE [LARGE SCALE GENOMIC DNA]</scope>
    <source>
        <strain>CT_02021853</strain>
    </source>
</reference>
<evidence type="ECO:0000255" key="1">
    <source>
        <dbReference type="HAMAP-Rule" id="MF_01594"/>
    </source>
</evidence>
<organism>
    <name type="scientific">Salmonella dublin (strain CT_02021853)</name>
    <dbReference type="NCBI Taxonomy" id="439851"/>
    <lineage>
        <taxon>Bacteria</taxon>
        <taxon>Pseudomonadati</taxon>
        <taxon>Pseudomonadota</taxon>
        <taxon>Gammaproteobacteria</taxon>
        <taxon>Enterobacterales</taxon>
        <taxon>Enterobacteriaceae</taxon>
        <taxon>Salmonella</taxon>
    </lineage>
</organism>
<sequence length="276" mass="31399">MLMITSFANPRVAQAFVDYMATQGVILTIQQHNQSDIWLADESQAERVRGELARFIENPGDPRYLAASWQSGQTNSGLRYRRFPFLATLRERAGPVTWIVMLACVLVYIAMSLIGDQTVMVWLAWPFDPVLKFEVWRYFTHIFMHFSLMHILFNLLWWWYLGGAVEKRLGSGKLIVITVISALLSGYVQQKFSGPWFGGLSGVVYALMGYVWLRGERDPQSGIYLQRGLIIFALLWIVAGWFDWFGMSMANGAHIAGLIVGLAMAFVDTLNARKRT</sequence>
<proteinExistence type="inferred from homology"/>
<comment type="function">
    <text evidence="1">Rhomboid-type serine protease that catalyzes intramembrane proteolysis.</text>
</comment>
<comment type="catalytic activity">
    <reaction evidence="1">
        <text>Cleaves type-1 transmembrane domains using a catalytic dyad composed of serine and histidine that are contributed by different transmembrane domains.</text>
        <dbReference type="EC" id="3.4.21.105"/>
    </reaction>
</comment>
<comment type="subcellular location">
    <subcellularLocation>
        <location evidence="1">Cell inner membrane</location>
        <topology evidence="1">Multi-pass membrane protein</topology>
    </subcellularLocation>
</comment>
<comment type="similarity">
    <text evidence="1">Belongs to the peptidase S54 family.</text>
</comment>
<keyword id="KW-0997">Cell inner membrane</keyword>
<keyword id="KW-1003">Cell membrane</keyword>
<keyword id="KW-0378">Hydrolase</keyword>
<keyword id="KW-0472">Membrane</keyword>
<keyword id="KW-0645">Protease</keyword>
<keyword id="KW-0720">Serine protease</keyword>
<keyword id="KW-0812">Transmembrane</keyword>
<keyword id="KW-1133">Transmembrane helix</keyword>
<dbReference type="EC" id="3.4.21.105" evidence="1"/>
<dbReference type="EMBL" id="CP001144">
    <property type="protein sequence ID" value="ACH77538.1"/>
    <property type="molecule type" value="Genomic_DNA"/>
</dbReference>
<dbReference type="RefSeq" id="WP_000928699.1">
    <property type="nucleotide sequence ID" value="NC_011205.1"/>
</dbReference>
<dbReference type="SMR" id="B5FKE3"/>
<dbReference type="MEROPS" id="S54.016"/>
<dbReference type="KEGG" id="sed:SeD_A3894"/>
<dbReference type="HOGENOM" id="CLU_058989_0_0_6"/>
<dbReference type="Proteomes" id="UP000008322">
    <property type="component" value="Chromosome"/>
</dbReference>
<dbReference type="GO" id="GO:0005886">
    <property type="term" value="C:plasma membrane"/>
    <property type="evidence" value="ECO:0007669"/>
    <property type="project" value="UniProtKB-SubCell"/>
</dbReference>
<dbReference type="GO" id="GO:0004252">
    <property type="term" value="F:serine-type endopeptidase activity"/>
    <property type="evidence" value="ECO:0007669"/>
    <property type="project" value="UniProtKB-UniRule"/>
</dbReference>
<dbReference type="GO" id="GO:0006508">
    <property type="term" value="P:proteolysis"/>
    <property type="evidence" value="ECO:0007669"/>
    <property type="project" value="UniProtKB-UniRule"/>
</dbReference>
<dbReference type="FunFam" id="1.20.1540.10:FF:000003">
    <property type="entry name" value="Rhomboid protease GlpG"/>
    <property type="match status" value="1"/>
</dbReference>
<dbReference type="FunFam" id="3.30.70.2350:FF:000001">
    <property type="entry name" value="Rhomboid protease GlpG"/>
    <property type="match status" value="1"/>
</dbReference>
<dbReference type="Gene3D" id="3.30.70.2350">
    <property type="match status" value="1"/>
</dbReference>
<dbReference type="Gene3D" id="1.20.1540.10">
    <property type="entry name" value="Rhomboid-like"/>
    <property type="match status" value="1"/>
</dbReference>
<dbReference type="HAMAP" id="MF_01594">
    <property type="entry name" value="Rhomboid_GlpG"/>
    <property type="match status" value="1"/>
</dbReference>
<dbReference type="InterPro" id="IPR038236">
    <property type="entry name" value="GlpG_N_sf"/>
</dbReference>
<dbReference type="InterPro" id="IPR022732">
    <property type="entry name" value="Peptidase_S54_GlpG_N"/>
</dbReference>
<dbReference type="InterPro" id="IPR022764">
    <property type="entry name" value="Peptidase_S54_rhomboid_dom"/>
</dbReference>
<dbReference type="InterPro" id="IPR035952">
    <property type="entry name" value="Rhomboid-like_sf"/>
</dbReference>
<dbReference type="InterPro" id="IPR023662">
    <property type="entry name" value="Rhomboid_protease_GlpG"/>
</dbReference>
<dbReference type="NCBIfam" id="NF008155">
    <property type="entry name" value="PRK10907.1"/>
    <property type="match status" value="1"/>
</dbReference>
<dbReference type="NCBIfam" id="TIGR04239">
    <property type="entry name" value="rhombo_GlpG"/>
    <property type="match status" value="1"/>
</dbReference>
<dbReference type="PANTHER" id="PTHR43066:SF26">
    <property type="entry name" value="RHOMBOID PROTEASE GLPG"/>
    <property type="match status" value="1"/>
</dbReference>
<dbReference type="PANTHER" id="PTHR43066">
    <property type="entry name" value="RHOMBOID-RELATED PROTEIN"/>
    <property type="match status" value="1"/>
</dbReference>
<dbReference type="Pfam" id="PF01694">
    <property type="entry name" value="Rhomboid"/>
    <property type="match status" value="1"/>
</dbReference>
<dbReference type="Pfam" id="PF12122">
    <property type="entry name" value="Rhomboid_N"/>
    <property type="match status" value="1"/>
</dbReference>
<dbReference type="SUPFAM" id="SSF144091">
    <property type="entry name" value="Rhomboid-like"/>
    <property type="match status" value="1"/>
</dbReference>
<gene>
    <name evidence="1" type="primary">glpG</name>
    <name type="ordered locus">SeD_A3894</name>
</gene>
<name>GLPG_SALDC</name>
<protein>
    <recommendedName>
        <fullName evidence="1">Rhomboid protease GlpG</fullName>
        <ecNumber evidence="1">3.4.21.105</ecNumber>
    </recommendedName>
    <alternativeName>
        <fullName evidence="1">Intramembrane serine protease</fullName>
    </alternativeName>
</protein>
<accession>B5FKE3</accession>